<name>BIOB_BURCH</name>
<feature type="chain" id="PRO_0000381261" description="Biotin synthase">
    <location>
        <begin position="1"/>
        <end position="339"/>
    </location>
</feature>
<feature type="domain" description="Radical SAM core" evidence="2">
    <location>
        <begin position="55"/>
        <end position="282"/>
    </location>
</feature>
<feature type="binding site" evidence="1">
    <location>
        <position position="70"/>
    </location>
    <ligand>
        <name>[4Fe-4S] cluster</name>
        <dbReference type="ChEBI" id="CHEBI:49883"/>
        <note>4Fe-4S-S-AdoMet</note>
    </ligand>
</feature>
<feature type="binding site" evidence="1">
    <location>
        <position position="74"/>
    </location>
    <ligand>
        <name>[4Fe-4S] cluster</name>
        <dbReference type="ChEBI" id="CHEBI:49883"/>
        <note>4Fe-4S-S-AdoMet</note>
    </ligand>
</feature>
<feature type="binding site" evidence="1">
    <location>
        <position position="77"/>
    </location>
    <ligand>
        <name>[4Fe-4S] cluster</name>
        <dbReference type="ChEBI" id="CHEBI:49883"/>
        <note>4Fe-4S-S-AdoMet</note>
    </ligand>
</feature>
<feature type="binding site" evidence="1">
    <location>
        <position position="114"/>
    </location>
    <ligand>
        <name>[2Fe-2S] cluster</name>
        <dbReference type="ChEBI" id="CHEBI:190135"/>
    </ligand>
</feature>
<feature type="binding site" evidence="1">
    <location>
        <position position="145"/>
    </location>
    <ligand>
        <name>[2Fe-2S] cluster</name>
        <dbReference type="ChEBI" id="CHEBI:190135"/>
    </ligand>
</feature>
<feature type="binding site" evidence="1">
    <location>
        <position position="205"/>
    </location>
    <ligand>
        <name>[2Fe-2S] cluster</name>
        <dbReference type="ChEBI" id="CHEBI:190135"/>
    </ligand>
</feature>
<feature type="binding site" evidence="1">
    <location>
        <position position="277"/>
    </location>
    <ligand>
        <name>[2Fe-2S] cluster</name>
        <dbReference type="ChEBI" id="CHEBI:190135"/>
    </ligand>
</feature>
<gene>
    <name evidence="1" type="primary">bioB</name>
    <name type="ordered locus">Bcen2424_2934</name>
</gene>
<accession>A0KB05</accession>
<dbReference type="EC" id="2.8.1.6" evidence="1"/>
<dbReference type="EMBL" id="CP000458">
    <property type="protein sequence ID" value="ABK09682.1"/>
    <property type="molecule type" value="Genomic_DNA"/>
</dbReference>
<dbReference type="RefSeq" id="WP_006477646.1">
    <property type="nucleotide sequence ID" value="NC_008542.1"/>
</dbReference>
<dbReference type="SMR" id="A0KB05"/>
<dbReference type="GeneID" id="83049729"/>
<dbReference type="KEGG" id="bch:Bcen2424_2934"/>
<dbReference type="HOGENOM" id="CLU_033172_1_2_4"/>
<dbReference type="UniPathway" id="UPA00078">
    <property type="reaction ID" value="UER00162"/>
</dbReference>
<dbReference type="GO" id="GO:0051537">
    <property type="term" value="F:2 iron, 2 sulfur cluster binding"/>
    <property type="evidence" value="ECO:0007669"/>
    <property type="project" value="UniProtKB-KW"/>
</dbReference>
<dbReference type="GO" id="GO:0051539">
    <property type="term" value="F:4 iron, 4 sulfur cluster binding"/>
    <property type="evidence" value="ECO:0007669"/>
    <property type="project" value="UniProtKB-KW"/>
</dbReference>
<dbReference type="GO" id="GO:0004076">
    <property type="term" value="F:biotin synthase activity"/>
    <property type="evidence" value="ECO:0007669"/>
    <property type="project" value="UniProtKB-UniRule"/>
</dbReference>
<dbReference type="GO" id="GO:0005506">
    <property type="term" value="F:iron ion binding"/>
    <property type="evidence" value="ECO:0007669"/>
    <property type="project" value="UniProtKB-UniRule"/>
</dbReference>
<dbReference type="GO" id="GO:0009102">
    <property type="term" value="P:biotin biosynthetic process"/>
    <property type="evidence" value="ECO:0007669"/>
    <property type="project" value="UniProtKB-UniRule"/>
</dbReference>
<dbReference type="CDD" id="cd01335">
    <property type="entry name" value="Radical_SAM"/>
    <property type="match status" value="1"/>
</dbReference>
<dbReference type="FunFam" id="3.20.20.70:FF:000011">
    <property type="entry name" value="Biotin synthase"/>
    <property type="match status" value="1"/>
</dbReference>
<dbReference type="Gene3D" id="3.20.20.70">
    <property type="entry name" value="Aldolase class I"/>
    <property type="match status" value="1"/>
</dbReference>
<dbReference type="HAMAP" id="MF_01694">
    <property type="entry name" value="BioB"/>
    <property type="match status" value="1"/>
</dbReference>
<dbReference type="InterPro" id="IPR013785">
    <property type="entry name" value="Aldolase_TIM"/>
</dbReference>
<dbReference type="InterPro" id="IPR010722">
    <property type="entry name" value="BATS_dom"/>
</dbReference>
<dbReference type="InterPro" id="IPR002684">
    <property type="entry name" value="Biotin_synth/BioAB"/>
</dbReference>
<dbReference type="InterPro" id="IPR024177">
    <property type="entry name" value="Biotin_synthase"/>
</dbReference>
<dbReference type="InterPro" id="IPR006638">
    <property type="entry name" value="Elp3/MiaA/NifB-like_rSAM"/>
</dbReference>
<dbReference type="InterPro" id="IPR007197">
    <property type="entry name" value="rSAM"/>
</dbReference>
<dbReference type="NCBIfam" id="TIGR00433">
    <property type="entry name" value="bioB"/>
    <property type="match status" value="1"/>
</dbReference>
<dbReference type="PANTHER" id="PTHR22976">
    <property type="entry name" value="BIOTIN SYNTHASE"/>
    <property type="match status" value="1"/>
</dbReference>
<dbReference type="PANTHER" id="PTHR22976:SF2">
    <property type="entry name" value="BIOTIN SYNTHASE, MITOCHONDRIAL"/>
    <property type="match status" value="1"/>
</dbReference>
<dbReference type="Pfam" id="PF06968">
    <property type="entry name" value="BATS"/>
    <property type="match status" value="1"/>
</dbReference>
<dbReference type="Pfam" id="PF04055">
    <property type="entry name" value="Radical_SAM"/>
    <property type="match status" value="1"/>
</dbReference>
<dbReference type="PIRSF" id="PIRSF001619">
    <property type="entry name" value="Biotin_synth"/>
    <property type="match status" value="1"/>
</dbReference>
<dbReference type="SFLD" id="SFLDF00272">
    <property type="entry name" value="biotin_synthase"/>
    <property type="match status" value="1"/>
</dbReference>
<dbReference type="SFLD" id="SFLDG01278">
    <property type="entry name" value="biotin_synthase_like"/>
    <property type="match status" value="1"/>
</dbReference>
<dbReference type="SMART" id="SM00876">
    <property type="entry name" value="BATS"/>
    <property type="match status" value="1"/>
</dbReference>
<dbReference type="SMART" id="SM00729">
    <property type="entry name" value="Elp3"/>
    <property type="match status" value="1"/>
</dbReference>
<dbReference type="SUPFAM" id="SSF102114">
    <property type="entry name" value="Radical SAM enzymes"/>
    <property type="match status" value="1"/>
</dbReference>
<dbReference type="PROSITE" id="PS51918">
    <property type="entry name" value="RADICAL_SAM"/>
    <property type="match status" value="1"/>
</dbReference>
<proteinExistence type="inferred from homology"/>
<sequence length="339" mass="37014">MTQAQTAAVQPAAIPVAAPASQRWRVADVVALFELPFNDLMFRAQQVHREHFDANAVQLSTLLSIKTGGCEEDCGYCSQSSHHDTGLKAEKLMDVDTVLDAARAAKANGASRFCMGAAWRNPKERHMPALTEMVRGVKELGLETCMTLGMLEDEQAQQLADAGLDYYNHNLDTSPEFYGQVISTRTYQDRLDTLDRVRDAGINVCCGGIIGMGESRRERAGLISQLANLNPYPESVPINNLVAIEGTPLEGTAPLDPFEFVRTIAVARITMPKAVVRLSAGREQLDDAMQAMCFLAGANSMFYGDQLLTTSNPQTQRDRALFERLGIRASQADALSDNA</sequence>
<organism>
    <name type="scientific">Burkholderia cenocepacia (strain HI2424)</name>
    <dbReference type="NCBI Taxonomy" id="331272"/>
    <lineage>
        <taxon>Bacteria</taxon>
        <taxon>Pseudomonadati</taxon>
        <taxon>Pseudomonadota</taxon>
        <taxon>Betaproteobacteria</taxon>
        <taxon>Burkholderiales</taxon>
        <taxon>Burkholderiaceae</taxon>
        <taxon>Burkholderia</taxon>
        <taxon>Burkholderia cepacia complex</taxon>
    </lineage>
</organism>
<reference key="1">
    <citation type="submission" date="2006-08" db="EMBL/GenBank/DDBJ databases">
        <title>Complete sequence of chromosome 1 of Burkholderia cenocepacia HI2424.</title>
        <authorList>
            <person name="Copeland A."/>
            <person name="Lucas S."/>
            <person name="Lapidus A."/>
            <person name="Barry K."/>
            <person name="Detter J.C."/>
            <person name="Glavina del Rio T."/>
            <person name="Hammon N."/>
            <person name="Israni S."/>
            <person name="Pitluck S."/>
            <person name="Chain P."/>
            <person name="Malfatti S."/>
            <person name="Shin M."/>
            <person name="Vergez L."/>
            <person name="Schmutz J."/>
            <person name="Larimer F."/>
            <person name="Land M."/>
            <person name="Hauser L."/>
            <person name="Kyrpides N."/>
            <person name="Kim E."/>
            <person name="LiPuma J.J."/>
            <person name="Gonzalez C.F."/>
            <person name="Konstantinidis K."/>
            <person name="Tiedje J.M."/>
            <person name="Richardson P."/>
        </authorList>
    </citation>
    <scope>NUCLEOTIDE SEQUENCE [LARGE SCALE GENOMIC DNA]</scope>
    <source>
        <strain>HI2424</strain>
    </source>
</reference>
<keyword id="KW-0001">2Fe-2S</keyword>
<keyword id="KW-0004">4Fe-4S</keyword>
<keyword id="KW-0093">Biotin biosynthesis</keyword>
<keyword id="KW-0408">Iron</keyword>
<keyword id="KW-0411">Iron-sulfur</keyword>
<keyword id="KW-0479">Metal-binding</keyword>
<keyword id="KW-0949">S-adenosyl-L-methionine</keyword>
<keyword id="KW-0808">Transferase</keyword>
<protein>
    <recommendedName>
        <fullName evidence="1">Biotin synthase</fullName>
        <ecNumber evidence="1">2.8.1.6</ecNumber>
    </recommendedName>
</protein>
<evidence type="ECO:0000255" key="1">
    <source>
        <dbReference type="HAMAP-Rule" id="MF_01694"/>
    </source>
</evidence>
<evidence type="ECO:0000255" key="2">
    <source>
        <dbReference type="PROSITE-ProRule" id="PRU01266"/>
    </source>
</evidence>
<comment type="function">
    <text evidence="1">Catalyzes the conversion of dethiobiotin (DTB) to biotin by the insertion of a sulfur atom into dethiobiotin via a radical-based mechanism.</text>
</comment>
<comment type="catalytic activity">
    <reaction evidence="1">
        <text>(4R,5S)-dethiobiotin + (sulfur carrier)-SH + 2 reduced [2Fe-2S]-[ferredoxin] + 2 S-adenosyl-L-methionine = (sulfur carrier)-H + biotin + 2 5'-deoxyadenosine + 2 L-methionine + 2 oxidized [2Fe-2S]-[ferredoxin]</text>
        <dbReference type="Rhea" id="RHEA:22060"/>
        <dbReference type="Rhea" id="RHEA-COMP:10000"/>
        <dbReference type="Rhea" id="RHEA-COMP:10001"/>
        <dbReference type="Rhea" id="RHEA-COMP:14737"/>
        <dbReference type="Rhea" id="RHEA-COMP:14739"/>
        <dbReference type="ChEBI" id="CHEBI:17319"/>
        <dbReference type="ChEBI" id="CHEBI:29917"/>
        <dbReference type="ChEBI" id="CHEBI:33737"/>
        <dbReference type="ChEBI" id="CHEBI:33738"/>
        <dbReference type="ChEBI" id="CHEBI:57586"/>
        <dbReference type="ChEBI" id="CHEBI:57844"/>
        <dbReference type="ChEBI" id="CHEBI:59789"/>
        <dbReference type="ChEBI" id="CHEBI:64428"/>
        <dbReference type="ChEBI" id="CHEBI:149473"/>
        <dbReference type="EC" id="2.8.1.6"/>
    </reaction>
</comment>
<comment type="cofactor">
    <cofactor evidence="1">
        <name>[4Fe-4S] cluster</name>
        <dbReference type="ChEBI" id="CHEBI:49883"/>
    </cofactor>
    <text evidence="1">Binds 1 [4Fe-4S] cluster. The cluster is coordinated with 3 cysteines and an exchangeable S-adenosyl-L-methionine.</text>
</comment>
<comment type="cofactor">
    <cofactor evidence="1">
        <name>[2Fe-2S] cluster</name>
        <dbReference type="ChEBI" id="CHEBI:190135"/>
    </cofactor>
    <text evidence="1">Binds 1 [2Fe-2S] cluster. The cluster is coordinated with 3 cysteines and 1 arginine.</text>
</comment>
<comment type="pathway">
    <text evidence="1">Cofactor biosynthesis; biotin biosynthesis; biotin from 7,8-diaminononanoate: step 2/2.</text>
</comment>
<comment type="subunit">
    <text evidence="1">Homodimer.</text>
</comment>
<comment type="similarity">
    <text evidence="1">Belongs to the radical SAM superfamily. Biotin synthase family.</text>
</comment>